<dbReference type="EC" id="6.1.1.3" evidence="1"/>
<dbReference type="EMBL" id="CP000921">
    <property type="protein sequence ID" value="ACO23122.1"/>
    <property type="molecule type" value="Genomic_DNA"/>
</dbReference>
<dbReference type="RefSeq" id="WP_000608349.1">
    <property type="nucleotide sequence ID" value="NC_012469.1"/>
</dbReference>
<dbReference type="SMR" id="C1CSP6"/>
<dbReference type="GeneID" id="45653153"/>
<dbReference type="KEGG" id="snt:SPT_1570"/>
<dbReference type="HOGENOM" id="CLU_008554_3_2_9"/>
<dbReference type="GO" id="GO:0005737">
    <property type="term" value="C:cytoplasm"/>
    <property type="evidence" value="ECO:0007669"/>
    <property type="project" value="UniProtKB-SubCell"/>
</dbReference>
<dbReference type="GO" id="GO:0005524">
    <property type="term" value="F:ATP binding"/>
    <property type="evidence" value="ECO:0007669"/>
    <property type="project" value="UniProtKB-UniRule"/>
</dbReference>
<dbReference type="GO" id="GO:0140096">
    <property type="term" value="F:catalytic activity, acting on a protein"/>
    <property type="evidence" value="ECO:0007669"/>
    <property type="project" value="UniProtKB-ARBA"/>
</dbReference>
<dbReference type="GO" id="GO:0046872">
    <property type="term" value="F:metal ion binding"/>
    <property type="evidence" value="ECO:0007669"/>
    <property type="project" value="UniProtKB-KW"/>
</dbReference>
<dbReference type="GO" id="GO:0004829">
    <property type="term" value="F:threonine-tRNA ligase activity"/>
    <property type="evidence" value="ECO:0007669"/>
    <property type="project" value="UniProtKB-UniRule"/>
</dbReference>
<dbReference type="GO" id="GO:0016740">
    <property type="term" value="F:transferase activity"/>
    <property type="evidence" value="ECO:0007669"/>
    <property type="project" value="UniProtKB-ARBA"/>
</dbReference>
<dbReference type="GO" id="GO:0000049">
    <property type="term" value="F:tRNA binding"/>
    <property type="evidence" value="ECO:0007669"/>
    <property type="project" value="UniProtKB-KW"/>
</dbReference>
<dbReference type="GO" id="GO:0006435">
    <property type="term" value="P:threonyl-tRNA aminoacylation"/>
    <property type="evidence" value="ECO:0007669"/>
    <property type="project" value="UniProtKB-UniRule"/>
</dbReference>
<dbReference type="CDD" id="cd01667">
    <property type="entry name" value="TGS_ThrRS"/>
    <property type="match status" value="1"/>
</dbReference>
<dbReference type="CDD" id="cd00860">
    <property type="entry name" value="ThrRS_anticodon"/>
    <property type="match status" value="1"/>
</dbReference>
<dbReference type="CDD" id="cd00771">
    <property type="entry name" value="ThrRS_core"/>
    <property type="match status" value="1"/>
</dbReference>
<dbReference type="FunFam" id="3.10.20.30:FF:000005">
    <property type="entry name" value="Threonine--tRNA ligase"/>
    <property type="match status" value="1"/>
</dbReference>
<dbReference type="FunFam" id="3.30.54.20:FF:000002">
    <property type="entry name" value="Threonine--tRNA ligase"/>
    <property type="match status" value="1"/>
</dbReference>
<dbReference type="FunFam" id="3.30.930.10:FF:000002">
    <property type="entry name" value="Threonine--tRNA ligase"/>
    <property type="match status" value="1"/>
</dbReference>
<dbReference type="FunFam" id="3.40.50.800:FF:000001">
    <property type="entry name" value="Threonine--tRNA ligase"/>
    <property type="match status" value="1"/>
</dbReference>
<dbReference type="FunFam" id="3.30.980.10:FF:000005">
    <property type="entry name" value="Threonyl-tRNA synthetase, mitochondrial"/>
    <property type="match status" value="1"/>
</dbReference>
<dbReference type="Gene3D" id="3.10.20.30">
    <property type="match status" value="1"/>
</dbReference>
<dbReference type="Gene3D" id="3.30.54.20">
    <property type="match status" value="1"/>
</dbReference>
<dbReference type="Gene3D" id="3.40.50.800">
    <property type="entry name" value="Anticodon-binding domain"/>
    <property type="match status" value="1"/>
</dbReference>
<dbReference type="Gene3D" id="3.30.930.10">
    <property type="entry name" value="Bira Bifunctional Protein, Domain 2"/>
    <property type="match status" value="1"/>
</dbReference>
<dbReference type="Gene3D" id="3.30.980.10">
    <property type="entry name" value="Threonyl-trna Synthetase, Chain A, domain 2"/>
    <property type="match status" value="1"/>
</dbReference>
<dbReference type="HAMAP" id="MF_00184">
    <property type="entry name" value="Thr_tRNA_synth"/>
    <property type="match status" value="1"/>
</dbReference>
<dbReference type="InterPro" id="IPR002314">
    <property type="entry name" value="aa-tRNA-synt_IIb"/>
</dbReference>
<dbReference type="InterPro" id="IPR006195">
    <property type="entry name" value="aa-tRNA-synth_II"/>
</dbReference>
<dbReference type="InterPro" id="IPR045864">
    <property type="entry name" value="aa-tRNA-synth_II/BPL/LPL"/>
</dbReference>
<dbReference type="InterPro" id="IPR004154">
    <property type="entry name" value="Anticodon-bd"/>
</dbReference>
<dbReference type="InterPro" id="IPR036621">
    <property type="entry name" value="Anticodon-bd_dom_sf"/>
</dbReference>
<dbReference type="InterPro" id="IPR012675">
    <property type="entry name" value="Beta-grasp_dom_sf"/>
</dbReference>
<dbReference type="InterPro" id="IPR004095">
    <property type="entry name" value="TGS"/>
</dbReference>
<dbReference type="InterPro" id="IPR012676">
    <property type="entry name" value="TGS-like"/>
</dbReference>
<dbReference type="InterPro" id="IPR002320">
    <property type="entry name" value="Thr-tRNA-ligase_IIa"/>
</dbReference>
<dbReference type="InterPro" id="IPR018163">
    <property type="entry name" value="Thr/Ala-tRNA-synth_IIc_edit"/>
</dbReference>
<dbReference type="InterPro" id="IPR047246">
    <property type="entry name" value="ThrRS_anticodon"/>
</dbReference>
<dbReference type="InterPro" id="IPR033728">
    <property type="entry name" value="ThrRS_core"/>
</dbReference>
<dbReference type="InterPro" id="IPR012947">
    <property type="entry name" value="tRNA_SAD"/>
</dbReference>
<dbReference type="NCBIfam" id="TIGR00418">
    <property type="entry name" value="thrS"/>
    <property type="match status" value="1"/>
</dbReference>
<dbReference type="PANTHER" id="PTHR11451:SF56">
    <property type="entry name" value="THREONINE--TRNA LIGASE 1"/>
    <property type="match status" value="1"/>
</dbReference>
<dbReference type="PANTHER" id="PTHR11451">
    <property type="entry name" value="THREONINE-TRNA LIGASE"/>
    <property type="match status" value="1"/>
</dbReference>
<dbReference type="Pfam" id="PF03129">
    <property type="entry name" value="HGTP_anticodon"/>
    <property type="match status" value="1"/>
</dbReference>
<dbReference type="Pfam" id="PF02824">
    <property type="entry name" value="TGS"/>
    <property type="match status" value="1"/>
</dbReference>
<dbReference type="Pfam" id="PF00587">
    <property type="entry name" value="tRNA-synt_2b"/>
    <property type="match status" value="1"/>
</dbReference>
<dbReference type="Pfam" id="PF07973">
    <property type="entry name" value="tRNA_SAD"/>
    <property type="match status" value="1"/>
</dbReference>
<dbReference type="PRINTS" id="PR01047">
    <property type="entry name" value="TRNASYNTHTHR"/>
</dbReference>
<dbReference type="SMART" id="SM00863">
    <property type="entry name" value="tRNA_SAD"/>
    <property type="match status" value="1"/>
</dbReference>
<dbReference type="SUPFAM" id="SSF52954">
    <property type="entry name" value="Class II aaRS ABD-related"/>
    <property type="match status" value="1"/>
</dbReference>
<dbReference type="SUPFAM" id="SSF55681">
    <property type="entry name" value="Class II aaRS and biotin synthetases"/>
    <property type="match status" value="1"/>
</dbReference>
<dbReference type="SUPFAM" id="SSF81271">
    <property type="entry name" value="TGS-like"/>
    <property type="match status" value="1"/>
</dbReference>
<dbReference type="SUPFAM" id="SSF55186">
    <property type="entry name" value="ThrRS/AlaRS common domain"/>
    <property type="match status" value="1"/>
</dbReference>
<dbReference type="PROSITE" id="PS50862">
    <property type="entry name" value="AA_TRNA_LIGASE_II"/>
    <property type="match status" value="1"/>
</dbReference>
<dbReference type="PROSITE" id="PS51880">
    <property type="entry name" value="TGS"/>
    <property type="match status" value="1"/>
</dbReference>
<name>SYT_STRZT</name>
<comment type="function">
    <text evidence="1">Catalyzes the attachment of threonine to tRNA(Thr) in a two-step reaction: L-threonine is first activated by ATP to form Thr-AMP and then transferred to the acceptor end of tRNA(Thr). Also edits incorrectly charged L-seryl-tRNA(Thr).</text>
</comment>
<comment type="catalytic activity">
    <reaction evidence="1">
        <text>tRNA(Thr) + L-threonine + ATP = L-threonyl-tRNA(Thr) + AMP + diphosphate + H(+)</text>
        <dbReference type="Rhea" id="RHEA:24624"/>
        <dbReference type="Rhea" id="RHEA-COMP:9670"/>
        <dbReference type="Rhea" id="RHEA-COMP:9704"/>
        <dbReference type="ChEBI" id="CHEBI:15378"/>
        <dbReference type="ChEBI" id="CHEBI:30616"/>
        <dbReference type="ChEBI" id="CHEBI:33019"/>
        <dbReference type="ChEBI" id="CHEBI:57926"/>
        <dbReference type="ChEBI" id="CHEBI:78442"/>
        <dbReference type="ChEBI" id="CHEBI:78534"/>
        <dbReference type="ChEBI" id="CHEBI:456215"/>
        <dbReference type="EC" id="6.1.1.3"/>
    </reaction>
</comment>
<comment type="cofactor">
    <cofactor evidence="1">
        <name>Zn(2+)</name>
        <dbReference type="ChEBI" id="CHEBI:29105"/>
    </cofactor>
    <text evidence="1">Binds 1 zinc ion per subunit.</text>
</comment>
<comment type="subunit">
    <text evidence="1">Homodimer.</text>
</comment>
<comment type="subcellular location">
    <subcellularLocation>
        <location evidence="1">Cytoplasm</location>
    </subcellularLocation>
</comment>
<comment type="similarity">
    <text evidence="1">Belongs to the class-II aminoacyl-tRNA synthetase family.</text>
</comment>
<organism>
    <name type="scientific">Streptococcus pneumoniae (strain Taiwan19F-14)</name>
    <dbReference type="NCBI Taxonomy" id="487213"/>
    <lineage>
        <taxon>Bacteria</taxon>
        <taxon>Bacillati</taxon>
        <taxon>Bacillota</taxon>
        <taxon>Bacilli</taxon>
        <taxon>Lactobacillales</taxon>
        <taxon>Streptococcaceae</taxon>
        <taxon>Streptococcus</taxon>
    </lineage>
</organism>
<keyword id="KW-0030">Aminoacyl-tRNA synthetase</keyword>
<keyword id="KW-0067">ATP-binding</keyword>
<keyword id="KW-0963">Cytoplasm</keyword>
<keyword id="KW-0436">Ligase</keyword>
<keyword id="KW-0479">Metal-binding</keyword>
<keyword id="KW-0547">Nucleotide-binding</keyword>
<keyword id="KW-0648">Protein biosynthesis</keyword>
<keyword id="KW-0694">RNA-binding</keyword>
<keyword id="KW-0820">tRNA-binding</keyword>
<keyword id="KW-0862">Zinc</keyword>
<feature type="chain" id="PRO_1000199573" description="Threonine--tRNA ligase">
    <location>
        <begin position="1"/>
        <end position="647"/>
    </location>
</feature>
<feature type="domain" description="TGS" evidence="2">
    <location>
        <begin position="1"/>
        <end position="61"/>
    </location>
</feature>
<feature type="region of interest" description="Catalytic" evidence="1">
    <location>
        <begin position="242"/>
        <end position="540"/>
    </location>
</feature>
<feature type="binding site" evidence="1">
    <location>
        <position position="336"/>
    </location>
    <ligand>
        <name>Zn(2+)</name>
        <dbReference type="ChEBI" id="CHEBI:29105"/>
    </ligand>
</feature>
<feature type="binding site" evidence="1">
    <location>
        <position position="387"/>
    </location>
    <ligand>
        <name>Zn(2+)</name>
        <dbReference type="ChEBI" id="CHEBI:29105"/>
    </ligand>
</feature>
<feature type="binding site" evidence="1">
    <location>
        <position position="517"/>
    </location>
    <ligand>
        <name>Zn(2+)</name>
        <dbReference type="ChEBI" id="CHEBI:29105"/>
    </ligand>
</feature>
<reference key="1">
    <citation type="journal article" date="2010" name="Genome Biol.">
        <title>Structure and dynamics of the pan-genome of Streptococcus pneumoniae and closely related species.</title>
        <authorList>
            <person name="Donati C."/>
            <person name="Hiller N.L."/>
            <person name="Tettelin H."/>
            <person name="Muzzi A."/>
            <person name="Croucher N.J."/>
            <person name="Angiuoli S.V."/>
            <person name="Oggioni M."/>
            <person name="Dunning Hotopp J.C."/>
            <person name="Hu F.Z."/>
            <person name="Riley D.R."/>
            <person name="Covacci A."/>
            <person name="Mitchell T.J."/>
            <person name="Bentley S.D."/>
            <person name="Kilian M."/>
            <person name="Ehrlich G.D."/>
            <person name="Rappuoli R."/>
            <person name="Moxon E.R."/>
            <person name="Masignani V."/>
        </authorList>
    </citation>
    <scope>NUCLEOTIDE SEQUENCE [LARGE SCALE GENOMIC DNA]</scope>
    <source>
        <strain>Taiwan19F-14</strain>
    </source>
</reference>
<evidence type="ECO:0000255" key="1">
    <source>
        <dbReference type="HAMAP-Rule" id="MF_00184"/>
    </source>
</evidence>
<evidence type="ECO:0000255" key="2">
    <source>
        <dbReference type="PROSITE-ProRule" id="PRU01228"/>
    </source>
</evidence>
<proteinExistence type="inferred from homology"/>
<gene>
    <name evidence="1" type="primary">thrS</name>
    <name type="ordered locus">SPT_1570</name>
</gene>
<accession>C1CSP6</accession>
<sequence>MINITFPDGAVREFESGVTTFEIAQSISNSLAKKALAGKFNGKLIDTTRAITEDGSIEIVTPDHEDALPILRHSAAHLFAQAARRLFPDIHLGVGPAIEDGFYYDTDNTAGQISNEDLPRIEEEMQKIVKENFPSIREEVTKDEAREIFKNDPYKLELIEEHSEDEGGLTIYRQGEYVDLCRGPHVPSTGRIQIFHLLHVAGAYWRGNSDNAMMQRIYGTAWFDKKDLKNYLQMREEAKERDHRKLGKELDLFMISQEVGQGLPFWLPNGATIRRELERYIVNKELASGYQHVYTPPLASVELYKTSGHWDHYQEDMFPTMDMGDGEEFVLRPMNCPHHIQVFKHHVHSYRELPIRIAEIGMMHRYEKSGALTGLQRVREMSLNDGHLFVTPEQIQEEFQRALQLIIDVYEDFNLTDYRFRLSLRDPQDTHKYFDNDEMWENAQTMLRAALDEMGVDYFEAEGEAAFYGPKLDIQIKTALGKEETLSTIQLDFLLPERFDLKYIGADGEDHRPVMIHRGVISTMERFTAILIENYKGAFPTWLAPHQVTLIPVSNEKHVDYAWEVAKKLRDRGVRADVDERNEKMQFKIRASQTSKIPYQLIVGDKEMEDETVNVRRYGQKETQTVSVDNFVQAILADIANKSRVEK</sequence>
<protein>
    <recommendedName>
        <fullName evidence="1">Threonine--tRNA ligase</fullName>
        <ecNumber evidence="1">6.1.1.3</ecNumber>
    </recommendedName>
    <alternativeName>
        <fullName evidence="1">Threonyl-tRNA synthetase</fullName>
        <shortName evidence="1">ThrRS</shortName>
    </alternativeName>
</protein>